<gene>
    <name type="primary">FMO3</name>
</gene>
<sequence length="532" mass="60052">MGKKVAIIGAGVSGLASIRSCLEEGLEPTCFEKSNDIGGLWKFSDHAEEGRASIYKSVFSNSSKEMMCFPDFPFPDDFPNFMHNSKIQEYIIAFAKEKNLLKYIQFKTFVSSVNKRPDFATTGQWDVTTERDGKKESAVFDAVMVCSGHHVYPNLPKESFPGLNHFKGKCFHSRDYKEPGVFNGKRVLVVGLGNSGCDIATELSRTAEQVMISSRSGSWVMSRVWDNGYPWDMLLVTRFGTFLKNNLPTAISDWLYVKQMNARFKHENYGLMPLNGVLRKEPVFNDELPASILCGIVSVKPNVKEFTETSAIFEDGTIFEGIDCVIFATGYSFAYPFLDESIIKSRNNEIILFKGVFPPLLEKSTIAVIGFVQSLGAAIPTVDLQSRWAAQVIKGTCTLPSMEDMMNDINEKMEKKRKWFGKSETIQTDYIVYMDELSSFIGAKPNIPWLFLTDPKLAMEVYFGPCSPYQFRLVGPGQWPGARNAILTQWDRSLKPMQTRVVGRLQKPCFFFHWLKLFAIPILLIAVFLVLT</sequence>
<comment type="function">
    <text evidence="2">Essential hepatic enzyme that catalyzes the oxygenation of a wide variety of nitrogen- and sulfur-containing compounds including drugs as well as dietary compounds. Plays an important role in the metabolism of trimethylamine (TMA), via the production of trimethylamine N-oxide (TMAO) metabolite. TMA is generated by the action of gut microbiota using dietary precursors such as choline, choline containing compounds, betaine or L-carnitine. By regulating TMAO concentration, FMO3 directly impacts both platelet responsiveness and rate of thrombus formation.</text>
</comment>
<comment type="catalytic activity">
    <reaction evidence="2">
        <text>trimethylamine + NADPH + O2 = trimethylamine N-oxide + NADP(+) + H2O</text>
        <dbReference type="Rhea" id="RHEA:31979"/>
        <dbReference type="ChEBI" id="CHEBI:15377"/>
        <dbReference type="ChEBI" id="CHEBI:15379"/>
        <dbReference type="ChEBI" id="CHEBI:15724"/>
        <dbReference type="ChEBI" id="CHEBI:57783"/>
        <dbReference type="ChEBI" id="CHEBI:58349"/>
        <dbReference type="ChEBI" id="CHEBI:58389"/>
        <dbReference type="EC" id="1.14.13.148"/>
    </reaction>
    <physiologicalReaction direction="left-to-right" evidence="2">
        <dbReference type="Rhea" id="RHEA:31980"/>
    </physiologicalReaction>
</comment>
<comment type="catalytic activity">
    <reaction evidence="2">
        <text>N,N-dimethylaniline + NADPH + O2 + H(+) = N,N-dimethylaniline N-oxide + NADP(+) + H2O</text>
        <dbReference type="Rhea" id="RHEA:24468"/>
        <dbReference type="ChEBI" id="CHEBI:15377"/>
        <dbReference type="ChEBI" id="CHEBI:15378"/>
        <dbReference type="ChEBI" id="CHEBI:15379"/>
        <dbReference type="ChEBI" id="CHEBI:16269"/>
        <dbReference type="ChEBI" id="CHEBI:17735"/>
        <dbReference type="ChEBI" id="CHEBI:57783"/>
        <dbReference type="ChEBI" id="CHEBI:58349"/>
        <dbReference type="EC" id="1.14.13.8"/>
    </reaction>
    <physiologicalReaction direction="left-to-right" evidence="2">
        <dbReference type="Rhea" id="RHEA:24469"/>
    </physiologicalReaction>
</comment>
<comment type="catalytic activity">
    <reaction evidence="2">
        <text>hypotaurine + NADPH + O2 + H(+) = taurine + NADP(+) + H2O</text>
        <dbReference type="Rhea" id="RHEA:69819"/>
        <dbReference type="ChEBI" id="CHEBI:15377"/>
        <dbReference type="ChEBI" id="CHEBI:15378"/>
        <dbReference type="ChEBI" id="CHEBI:15379"/>
        <dbReference type="ChEBI" id="CHEBI:57783"/>
        <dbReference type="ChEBI" id="CHEBI:57853"/>
        <dbReference type="ChEBI" id="CHEBI:58349"/>
        <dbReference type="ChEBI" id="CHEBI:507393"/>
        <dbReference type="EC" id="1.14.13.8"/>
    </reaction>
    <physiologicalReaction direction="left-to-right" evidence="2">
        <dbReference type="Rhea" id="RHEA:69820"/>
    </physiologicalReaction>
</comment>
<comment type="catalytic activity">
    <reaction evidence="2">
        <text>(S)-nicotine + NADPH + O2 = trans-(S)-nicotine N(1')-oxide + NADP(+) + H2O</text>
        <dbReference type="Rhea" id="RHEA:58720"/>
        <dbReference type="ChEBI" id="CHEBI:15377"/>
        <dbReference type="ChEBI" id="CHEBI:15379"/>
        <dbReference type="ChEBI" id="CHEBI:57783"/>
        <dbReference type="ChEBI" id="CHEBI:58349"/>
        <dbReference type="ChEBI" id="CHEBI:59806"/>
        <dbReference type="ChEBI" id="CHEBI:142660"/>
    </reaction>
    <physiologicalReaction direction="left-to-right" evidence="2">
        <dbReference type="Rhea" id="RHEA:58721"/>
    </physiologicalReaction>
</comment>
<comment type="catalytic activity">
    <reaction evidence="2">
        <text>albendazole + NADPH + O2 + H(+) = albendazole S-oxide + NADP(+) + H2O</text>
        <dbReference type="Rhea" id="RHEA:10796"/>
        <dbReference type="ChEBI" id="CHEBI:15377"/>
        <dbReference type="ChEBI" id="CHEBI:15378"/>
        <dbReference type="ChEBI" id="CHEBI:15379"/>
        <dbReference type="ChEBI" id="CHEBI:16664"/>
        <dbReference type="ChEBI" id="CHEBI:16959"/>
        <dbReference type="ChEBI" id="CHEBI:57783"/>
        <dbReference type="ChEBI" id="CHEBI:58349"/>
        <dbReference type="EC" id="1.14.13.32"/>
    </reaction>
    <physiologicalReaction direction="left-to-right" evidence="2">
        <dbReference type="Rhea" id="RHEA:10797"/>
    </physiologicalReaction>
</comment>
<comment type="cofactor">
    <cofactor evidence="1">
        <name>FAD</name>
        <dbReference type="ChEBI" id="CHEBI:57692"/>
    </cofactor>
</comment>
<comment type="subcellular location">
    <subcellularLocation>
        <location evidence="3">Microsome membrane</location>
        <topology evidence="6">Single-pass membrane protein</topology>
    </subcellularLocation>
    <subcellularLocation>
        <location evidence="3">Endoplasmic reticulum membrane</location>
        <topology evidence="6">Single-pass membrane protein</topology>
    </subcellularLocation>
</comment>
<comment type="similarity">
    <text evidence="7">Belongs to the FMO family.</text>
</comment>
<keyword id="KW-0256">Endoplasmic reticulum</keyword>
<keyword id="KW-0274">FAD</keyword>
<keyword id="KW-0285">Flavoprotein</keyword>
<keyword id="KW-0472">Membrane</keyword>
<keyword id="KW-0492">Microsome</keyword>
<keyword id="KW-0503">Monooxygenase</keyword>
<keyword id="KW-0521">NADP</keyword>
<keyword id="KW-0560">Oxidoreductase</keyword>
<keyword id="KW-0597">Phosphoprotein</keyword>
<keyword id="KW-1185">Reference proteome</keyword>
<keyword id="KW-0812">Transmembrane</keyword>
<keyword id="KW-1133">Transmembrane helix</keyword>
<protein>
    <recommendedName>
        <fullName evidence="2">Flavin-containing monooxygenase 3</fullName>
        <ecNumber evidence="2">1.14.13.148</ecNumber>
        <ecNumber evidence="2">1.14.13.32</ecNumber>
        <ecNumber evidence="2">1.14.13.8</ecNumber>
    </recommendedName>
    <alternativeName>
        <fullName>Dimethylaniline monooxygenase [N-oxide-forming] 3</fullName>
    </alternativeName>
    <alternativeName>
        <fullName>Dimethylaniline oxidase 3</fullName>
    </alternativeName>
    <alternativeName>
        <fullName>Hepatic flavin-containing monooxygenase 3</fullName>
        <shortName>FMO 3</shortName>
    </alternativeName>
    <alternativeName>
        <fullName>Trimethylamine monooxygenase</fullName>
    </alternativeName>
</protein>
<name>FMO3_PANTR</name>
<proteinExistence type="inferred from homology"/>
<dbReference type="EC" id="1.14.13.148" evidence="2"/>
<dbReference type="EC" id="1.14.13.32" evidence="2"/>
<dbReference type="EC" id="1.14.13.8" evidence="2"/>
<dbReference type="EMBL" id="AY082442">
    <property type="protein sequence ID" value="AAP57529.1"/>
    <property type="molecule type" value="Genomic_DNA"/>
</dbReference>
<dbReference type="EMBL" id="AY063499">
    <property type="protein sequence ID" value="AAP57529.1"/>
    <property type="status" value="JOINED"/>
    <property type="molecule type" value="Genomic_DNA"/>
</dbReference>
<dbReference type="EMBL" id="AY082436">
    <property type="protein sequence ID" value="AAP57529.1"/>
    <property type="status" value="JOINED"/>
    <property type="molecule type" value="Genomic_DNA"/>
</dbReference>
<dbReference type="EMBL" id="AY082437">
    <property type="protein sequence ID" value="AAP57529.1"/>
    <property type="status" value="JOINED"/>
    <property type="molecule type" value="Genomic_DNA"/>
</dbReference>
<dbReference type="EMBL" id="AY082438">
    <property type="protein sequence ID" value="AAP57529.1"/>
    <property type="status" value="JOINED"/>
    <property type="molecule type" value="Genomic_DNA"/>
</dbReference>
<dbReference type="EMBL" id="AY082439">
    <property type="protein sequence ID" value="AAP57529.1"/>
    <property type="status" value="JOINED"/>
    <property type="molecule type" value="Genomic_DNA"/>
</dbReference>
<dbReference type="EMBL" id="AY082440">
    <property type="protein sequence ID" value="AAP57529.1"/>
    <property type="status" value="JOINED"/>
    <property type="molecule type" value="Genomic_DNA"/>
</dbReference>
<dbReference type="EMBL" id="AY082441">
    <property type="protein sequence ID" value="AAP57529.1"/>
    <property type="status" value="JOINED"/>
    <property type="molecule type" value="Genomic_DNA"/>
</dbReference>
<dbReference type="RefSeq" id="NP_001009092.1">
    <property type="nucleotide sequence ID" value="NM_001009092.1"/>
</dbReference>
<dbReference type="RefSeq" id="XP_009435956.2">
    <property type="nucleotide sequence ID" value="XM_009437681.5"/>
</dbReference>
<dbReference type="RefSeq" id="XP_016818222.1">
    <property type="nucleotide sequence ID" value="XM_016962733.3"/>
</dbReference>
<dbReference type="SMR" id="Q7YS44"/>
<dbReference type="FunCoup" id="Q7YS44">
    <property type="interactions" value="97"/>
</dbReference>
<dbReference type="STRING" id="9598.ENSPTRP00000002778"/>
<dbReference type="PaxDb" id="9598-ENSPTRP00000002778"/>
<dbReference type="Ensembl" id="ENSPTRT00000003026.6">
    <property type="protein sequence ID" value="ENSPTRP00000002778.6"/>
    <property type="gene ID" value="ENSPTRG00000001670.7"/>
</dbReference>
<dbReference type="GeneID" id="457505"/>
<dbReference type="KEGG" id="ptr:457505"/>
<dbReference type="CTD" id="2328"/>
<dbReference type="VGNC" id="VGNC:544">
    <property type="gene designation" value="FMO3"/>
</dbReference>
<dbReference type="eggNOG" id="KOG1399">
    <property type="taxonomic scope" value="Eukaryota"/>
</dbReference>
<dbReference type="GeneTree" id="ENSGT00940000161339"/>
<dbReference type="InParanoid" id="Q7YS44"/>
<dbReference type="OMA" id="WFDLQYD"/>
<dbReference type="OrthoDB" id="1837at9604"/>
<dbReference type="Proteomes" id="UP000002277">
    <property type="component" value="Chromosome 1"/>
</dbReference>
<dbReference type="Bgee" id="ENSPTRG00000001670">
    <property type="expression patterns" value="Expressed in liver and 11 other cell types or tissues"/>
</dbReference>
<dbReference type="GO" id="GO:0005789">
    <property type="term" value="C:endoplasmic reticulum membrane"/>
    <property type="evidence" value="ECO:0007669"/>
    <property type="project" value="UniProtKB-SubCell"/>
</dbReference>
<dbReference type="GO" id="GO:0047638">
    <property type="term" value="F:albendazole monooxygenase activity"/>
    <property type="evidence" value="ECO:0007669"/>
    <property type="project" value="RHEA"/>
</dbReference>
<dbReference type="GO" id="GO:0050660">
    <property type="term" value="F:flavin adenine dinucleotide binding"/>
    <property type="evidence" value="ECO:0007669"/>
    <property type="project" value="InterPro"/>
</dbReference>
<dbReference type="GO" id="GO:0047822">
    <property type="term" value="F:hypotaurine monooxygenase activity"/>
    <property type="evidence" value="ECO:0007669"/>
    <property type="project" value="Ensembl"/>
</dbReference>
<dbReference type="GO" id="GO:0004499">
    <property type="term" value="F:N,N-dimethylaniline monooxygenase activity"/>
    <property type="evidence" value="ECO:0000318"/>
    <property type="project" value="GO_Central"/>
</dbReference>
<dbReference type="GO" id="GO:0050661">
    <property type="term" value="F:NADP binding"/>
    <property type="evidence" value="ECO:0007669"/>
    <property type="project" value="InterPro"/>
</dbReference>
<dbReference type="GO" id="GO:0034899">
    <property type="term" value="F:trimethylamine monooxygenase activity"/>
    <property type="evidence" value="ECO:0007669"/>
    <property type="project" value="UniProtKB-EC"/>
</dbReference>
<dbReference type="GO" id="GO:0042412">
    <property type="term" value="P:taurine biosynthetic process"/>
    <property type="evidence" value="ECO:0007669"/>
    <property type="project" value="Ensembl"/>
</dbReference>
<dbReference type="FunFam" id="3.50.50.60:FF:000023">
    <property type="entry name" value="Dimethylaniline monooxygenase [N-oxide-forming]"/>
    <property type="match status" value="1"/>
</dbReference>
<dbReference type="FunFam" id="3.50.50.60:FF:000073">
    <property type="entry name" value="Dimethylaniline monooxygenase [N-oxide-forming]"/>
    <property type="match status" value="1"/>
</dbReference>
<dbReference type="FunFam" id="3.50.50.60:FF:000174">
    <property type="entry name" value="Dimethylaniline monooxygenase [N-oxide-forming]"/>
    <property type="match status" value="1"/>
</dbReference>
<dbReference type="FunFam" id="3.50.50.60:FF:000454">
    <property type="entry name" value="Dimethylaniline monooxygenase [N-oxide-forming]"/>
    <property type="match status" value="1"/>
</dbReference>
<dbReference type="Gene3D" id="3.50.50.60">
    <property type="entry name" value="FAD/NAD(P)-binding domain"/>
    <property type="match status" value="2"/>
</dbReference>
<dbReference type="InterPro" id="IPR036188">
    <property type="entry name" value="FAD/NAD-bd_sf"/>
</dbReference>
<dbReference type="InterPro" id="IPR000960">
    <property type="entry name" value="Flavin_mOase"/>
</dbReference>
<dbReference type="InterPro" id="IPR020946">
    <property type="entry name" value="Flavin_mOase-like"/>
</dbReference>
<dbReference type="InterPro" id="IPR002255">
    <property type="entry name" value="Flavin_mOase_3"/>
</dbReference>
<dbReference type="InterPro" id="IPR050346">
    <property type="entry name" value="FMO-like"/>
</dbReference>
<dbReference type="PANTHER" id="PTHR23023">
    <property type="entry name" value="DIMETHYLANILINE MONOOXYGENASE"/>
    <property type="match status" value="1"/>
</dbReference>
<dbReference type="Pfam" id="PF00743">
    <property type="entry name" value="FMO-like"/>
    <property type="match status" value="1"/>
</dbReference>
<dbReference type="PIRSF" id="PIRSF000332">
    <property type="entry name" value="FMO"/>
    <property type="match status" value="1"/>
</dbReference>
<dbReference type="PRINTS" id="PR00370">
    <property type="entry name" value="FMOXYGENASE"/>
</dbReference>
<dbReference type="PRINTS" id="PR01123">
    <property type="entry name" value="FMOXYGENASE3"/>
</dbReference>
<dbReference type="SUPFAM" id="SSF51905">
    <property type="entry name" value="FAD/NAD(P)-binding domain"/>
    <property type="match status" value="2"/>
</dbReference>
<reference key="1">
    <citation type="journal article" date="2001" name="Drug Metab. Dispos.">
        <title>Population distribution of human flavin-containing monooxygenase form 3: gene polymorphisms.</title>
        <authorList>
            <person name="Cashman J.R."/>
            <person name="Zhang J."/>
            <person name="Leushner J."/>
            <person name="Braun A."/>
        </authorList>
    </citation>
    <scope>NUCLEOTIDE SEQUENCE [GENOMIC DNA]</scope>
</reference>
<accession>Q7YS44</accession>
<evidence type="ECO:0000250" key="1"/>
<evidence type="ECO:0000250" key="2">
    <source>
        <dbReference type="UniProtKB" id="P31513"/>
    </source>
</evidence>
<evidence type="ECO:0000250" key="3">
    <source>
        <dbReference type="UniProtKB" id="P32417"/>
    </source>
</evidence>
<evidence type="ECO:0000250" key="4">
    <source>
        <dbReference type="UniProtKB" id="P97501"/>
    </source>
</evidence>
<evidence type="ECO:0000250" key="5">
    <source>
        <dbReference type="UniProtKB" id="Q9HFE4"/>
    </source>
</evidence>
<evidence type="ECO:0000255" key="6"/>
<evidence type="ECO:0000305" key="7"/>
<feature type="chain" id="PRO_0000147657" description="Flavin-containing monooxygenase 3">
    <location>
        <begin position="1"/>
        <end position="532"/>
    </location>
</feature>
<feature type="transmembrane region" description="Helical" evidence="6">
    <location>
        <begin position="510"/>
        <end position="530"/>
    </location>
</feature>
<feature type="binding site" evidence="5">
    <location>
        <begin position="9"/>
        <end position="13"/>
    </location>
    <ligand>
        <name>FAD</name>
        <dbReference type="ChEBI" id="CHEBI:57692"/>
    </ligand>
</feature>
<feature type="binding site" evidence="5">
    <location>
        <position position="32"/>
    </location>
    <ligand>
        <name>FAD</name>
        <dbReference type="ChEBI" id="CHEBI:57692"/>
    </ligand>
</feature>
<feature type="binding site" evidence="5">
    <location>
        <begin position="40"/>
        <end position="41"/>
    </location>
    <ligand>
        <name>FAD</name>
        <dbReference type="ChEBI" id="CHEBI:57692"/>
    </ligand>
</feature>
<feature type="binding site" evidence="5">
    <location>
        <begin position="60"/>
        <end position="61"/>
    </location>
    <ligand>
        <name>NADP(+)</name>
        <dbReference type="ChEBI" id="CHEBI:58349"/>
    </ligand>
</feature>
<feature type="binding site" evidence="5">
    <location>
        <begin position="61"/>
        <end position="62"/>
    </location>
    <ligand>
        <name>FAD</name>
        <dbReference type="ChEBI" id="CHEBI:57692"/>
    </ligand>
</feature>
<feature type="binding site" evidence="5">
    <location>
        <begin position="195"/>
        <end position="198"/>
    </location>
    <ligand>
        <name>NADP(+)</name>
        <dbReference type="ChEBI" id="CHEBI:58349"/>
    </ligand>
</feature>
<feature type="modified residue" description="Phosphoserine" evidence="4">
    <location>
        <position position="401"/>
    </location>
</feature>
<organism>
    <name type="scientific">Pan troglodytes</name>
    <name type="common">Chimpanzee</name>
    <dbReference type="NCBI Taxonomy" id="9598"/>
    <lineage>
        <taxon>Eukaryota</taxon>
        <taxon>Metazoa</taxon>
        <taxon>Chordata</taxon>
        <taxon>Craniata</taxon>
        <taxon>Vertebrata</taxon>
        <taxon>Euteleostomi</taxon>
        <taxon>Mammalia</taxon>
        <taxon>Eutheria</taxon>
        <taxon>Euarchontoglires</taxon>
        <taxon>Primates</taxon>
        <taxon>Haplorrhini</taxon>
        <taxon>Catarrhini</taxon>
        <taxon>Hominidae</taxon>
        <taxon>Pan</taxon>
    </lineage>
</organism>